<keyword id="KW-0134">Cell wall</keyword>
<keyword id="KW-0903">Direct protein sequencing</keyword>
<keyword id="KW-1015">Disulfide bond</keyword>
<keyword id="KW-0964">Secreted</keyword>
<keyword id="KW-0732">Signal</keyword>
<keyword id="KW-0800">Toxin</keyword>
<keyword id="KW-0843">Virulence</keyword>
<dbReference type="EMBL" id="U00963">
    <property type="protein sequence ID" value="AAA18912.1"/>
    <property type="molecule type" value="Unassigned_DNA"/>
</dbReference>
<dbReference type="EMBL" id="U23203">
    <property type="protein sequence ID" value="AAB41284.1"/>
    <property type="molecule type" value="Genomic_DNA"/>
</dbReference>
<dbReference type="EMBL" id="S52233">
    <property type="protein sequence ID" value="AAB24789.1"/>
    <property type="molecule type" value="Genomic_DNA"/>
</dbReference>
<dbReference type="PIR" id="S41996">
    <property type="entry name" value="A44596"/>
</dbReference>
<dbReference type="PIR" id="S62753">
    <property type="entry name" value="S62753"/>
</dbReference>
<dbReference type="BMRB" id="Q06153"/>
<dbReference type="SMR" id="Q06153"/>
<dbReference type="GO" id="GO:0005576">
    <property type="term" value="C:extracellular region"/>
    <property type="evidence" value="ECO:0007669"/>
    <property type="project" value="UniProtKB-KW"/>
</dbReference>
<dbReference type="GO" id="GO:0090729">
    <property type="term" value="F:toxin activity"/>
    <property type="evidence" value="ECO:0007669"/>
    <property type="project" value="UniProtKB-KW"/>
</dbReference>
<dbReference type="CDD" id="cd23508">
    <property type="entry name" value="hydrophobin_II"/>
    <property type="match status" value="1"/>
</dbReference>
<dbReference type="Gene3D" id="3.20.120.10">
    <property type="entry name" value="Hydrophobin"/>
    <property type="match status" value="1"/>
</dbReference>
<dbReference type="InterPro" id="IPR010636">
    <property type="entry name" value="Cerato-ulmin_hydrophobin"/>
</dbReference>
<dbReference type="InterPro" id="IPR036686">
    <property type="entry name" value="Hydrophobin_sf"/>
</dbReference>
<dbReference type="PANTHER" id="PTHR42341">
    <property type="entry name" value="HYDROPHOBIN"/>
    <property type="match status" value="1"/>
</dbReference>
<dbReference type="PANTHER" id="PTHR42341:SF1">
    <property type="entry name" value="HYDROPHOBIN"/>
    <property type="match status" value="1"/>
</dbReference>
<dbReference type="Pfam" id="PF06766">
    <property type="entry name" value="Hydrophobin_2"/>
    <property type="match status" value="1"/>
</dbReference>
<dbReference type="SUPFAM" id="SSF101751">
    <property type="entry name" value="Hydrophobin II, HfbII"/>
    <property type="match status" value="1"/>
</dbReference>
<organism>
    <name type="scientific">Ophiostoma ulmi</name>
    <name type="common">Dutch elm disease fungus</name>
    <dbReference type="NCBI Taxonomy" id="5174"/>
    <lineage>
        <taxon>Eukaryota</taxon>
        <taxon>Fungi</taxon>
        <taxon>Dikarya</taxon>
        <taxon>Ascomycota</taxon>
        <taxon>Pezizomycotina</taxon>
        <taxon>Sordariomycetes</taxon>
        <taxon>Sordariomycetidae</taxon>
        <taxon>Ophiostomatales</taxon>
        <taxon>Ophiostomataceae</taxon>
        <taxon>Ophiostoma</taxon>
    </lineage>
</organism>
<gene>
    <name evidence="8" type="primary">CU</name>
</gene>
<accession>Q06153</accession>
<protein>
    <recommendedName>
        <fullName evidence="9">Class II hydrophobin CU</fullName>
    </recommendedName>
    <alternativeName>
        <fullName evidence="8">Cerato-ulmin</fullName>
        <shortName evidence="8">CU</shortName>
    </alternativeName>
    <alternativeName>
        <fullName evidence="8">Dutch elm disease toxin</fullName>
    </alternativeName>
</protein>
<name>CEUL_OPHUL</name>
<feature type="signal peptide" evidence="7">
    <location>
        <begin position="1"/>
        <end position="25"/>
    </location>
</feature>
<feature type="chain" id="PRO_0000013517" description="Class II hydrophobin CU">
    <location>
        <begin position="26"/>
        <end position="100"/>
    </location>
</feature>
<feature type="disulfide bond" evidence="1">
    <location>
        <begin position="32"/>
        <end position="82"/>
    </location>
</feature>
<feature type="disulfide bond" evidence="1">
    <location>
        <begin position="42"/>
        <end position="72"/>
    </location>
</feature>
<feature type="disulfide bond" evidence="1">
    <location>
        <begin position="43"/>
        <end position="55"/>
    </location>
</feature>
<feature type="disulfide bond" evidence="1">
    <location>
        <begin position="83"/>
        <end position="94"/>
    </location>
</feature>
<feature type="sequence variant" description="In strain: P1.">
    <original>M</original>
    <variation>L</variation>
    <location>
        <position position="16"/>
    </location>
</feature>
<feature type="sequence variant" description="In strain: P1.">
    <original>N</original>
    <variation>S</variation>
    <location>
        <position position="23"/>
    </location>
</feature>
<feature type="sequence variant" description="In strain: P1.">
    <original>S</original>
    <variation>P</variation>
    <location>
        <position position="28"/>
    </location>
</feature>
<feature type="sequence variant" description="In strain: P1.">
    <original>A</original>
    <variation>R</variation>
    <location>
        <position position="74"/>
    </location>
</feature>
<feature type="sequence variant" description="In strain: P1.">
    <original>S</original>
    <variation>Q</variation>
    <location>
        <position position="79"/>
    </location>
</feature>
<evidence type="ECO:0000250" key="1">
    <source>
        <dbReference type="UniProtKB" id="P52754"/>
    </source>
</evidence>
<evidence type="ECO:0000269" key="2">
    <source>
    </source>
</evidence>
<evidence type="ECO:0000269" key="3">
    <source>
    </source>
</evidence>
<evidence type="ECO:0000269" key="4">
    <source>
    </source>
</evidence>
<evidence type="ECO:0000269" key="5">
    <source>
    </source>
</evidence>
<evidence type="ECO:0000269" key="6">
    <source>
    </source>
</evidence>
<evidence type="ECO:0000269" key="7">
    <source ref="4"/>
</evidence>
<evidence type="ECO:0000303" key="8">
    <source>
    </source>
</evidence>
<evidence type="ECO:0000303" key="9">
    <source>
    </source>
</evidence>
<evidence type="ECO:0000305" key="10"/>
<sequence>MQFSIATIALFLSSAMAAPYSGNSNSDSYDPCTGLLQKSPQCCNTDILGVANLDCHGPPSVPTSPSQFQASCVADGGRSARCCTLSLLGLALVCTDPVGI</sequence>
<reference key="1">
    <citation type="journal article" date="1994" name="Curr. Genet.">
        <title>Isolation and characterization of the cerato-ulmin toxin gene of the Dutch elm disease pathogen, Ophiostoma ulmi.</title>
        <authorList>
            <person name="Bowden C.G."/>
            <person name="Hintz W.E."/>
            <person name="Jeng R."/>
            <person name="Hubbes M."/>
            <person name="Horgen P.A."/>
        </authorList>
    </citation>
    <scope>NUCLEOTIDE SEQUENCE [GENOMIC DNA]</scope>
    <source>
        <strain>MH75</strain>
    </source>
</reference>
<reference key="2">
    <citation type="journal article" date="1996" name="Curr. Genet.">
        <title>A comparison of the nucleotide sequence of the cerato-ulmin gene and the rDNA ITS between aggressive and non-aggressive isolates of Ophiostoma ulmi sensu lato, the causal agent of Dutch elm disease.</title>
        <authorList>
            <person name="Jeng R."/>
            <person name="Hintz W.E."/>
            <person name="Bowden C.G."/>
            <person name="Horgen P.A."/>
            <person name="Hubbes M."/>
        </authorList>
    </citation>
    <scope>NUCLEOTIDE SEQUENCE [GENOMIC DNA]</scope>
    <source>
        <strain>P1</strain>
    </source>
</reference>
<reference key="3">
    <citation type="journal article" date="1992" name="Mol. Plant Microbe Interact.">
        <title>Expression of a modified Dutch elm disease toxin in Escherichia coli.</title>
        <authorList>
            <person name="Bolyard M.G."/>
            <person name="Sticklen M.B."/>
        </authorList>
    </citation>
    <scope>NUCLEOTIDE SEQUENCE OF 26-100</scope>
</reference>
<reference key="4">
    <citation type="book" date="1993" name="Dutch elm disease research: cellular and molecular approaches">
        <editorList>
            <person name="Stricklen M."/>
            <person name="Sherald J."/>
        </editorList>
        <authorList>
            <person name="Yaguchi M."/>
            <person name="Pusztai-Carey M."/>
            <person name="Roy C."/>
            <person name="Surewicz W.K."/>
            <person name="Carey P.R."/>
            <person name="Stevenson K.J."/>
            <person name="Richards W.C."/>
            <person name="Takai S."/>
        </authorList>
    </citation>
    <scope>PROTEIN SEQUENCE OF 26-100</scope>
</reference>
<reference key="5">
    <citation type="journal article" date="1997" name="Fungal Genet. Biol.">
        <title>Cerato-ulmin, a hydrophobin secreted by the causal agents of Dutch elm disease, is a parasitic fitness factor.</title>
        <authorList>
            <person name="Temple B."/>
            <person name="Horgen P.A."/>
            <person name="Bernier L."/>
            <person name="Hintz W.E."/>
        </authorList>
    </citation>
    <scope>FUNCTION</scope>
</reference>
<reference key="6">
    <citation type="journal article" date="2000" name="Mol. Plant Microbe Interact.">
        <title>Functional expression of the gene cu, encoding the phytotoxic hydrophobin cerato-ulmin, enables Ophiostoma quercus, a nonpathogen on elm, to cause symptoms of Dutch elm disease.</title>
        <authorList>
            <person name="Del Sorbo G."/>
            <person name="Scala F."/>
            <person name="Parrella G."/>
            <person name="Lorito M."/>
            <person name="Comparini C."/>
            <person name="Ruocco M."/>
            <person name="Scala A."/>
        </authorList>
    </citation>
    <scope>FUNCTION</scope>
</reference>
<reference key="7">
    <citation type="journal article" date="2003" name="Mol. Genet. Genomics">
        <title>Real time RT-PCR quantification and Northern analysis of cerato-ulmin (CU) gene transcription in different strains of the phytopathogens Ophiostoma ulmi and O. novo-ulmi.</title>
        <authorList>
            <person name="Tadesse Y."/>
            <person name="Bernier L."/>
            <person name="Hintz W.E."/>
            <person name="Horgen P.A."/>
        </authorList>
    </citation>
    <scope>INDUCTION</scope>
</reference>
<reference key="8">
    <citation type="journal article" date="2014" name="Fungal Genet. Biol.">
        <title>Establishment of invasive and non-invasive reporter systems to investigate American elm-Ophiostoma novo-ulmi interactions.</title>
        <authorList>
            <person name="Sherif S."/>
            <person name="Jones A.M."/>
            <person name="Shukla M.R."/>
            <person name="Saxena P.K."/>
        </authorList>
    </citation>
    <scope>FUNCTION</scope>
</reference>
<reference key="9">
    <citation type="journal article" date="2018" name="Colloids Surf. B Biointerfaces">
        <title>Formation and elasticity of membranes of the class II hydrophobin Cerato-ulmin at oil-water interfaces.</title>
        <authorList>
            <person name="Zhang X."/>
            <person name="Kirby S.M."/>
            <person name="Chen Y."/>
            <person name="Anna S.L."/>
            <person name="Walker L.M."/>
            <person name="Hung F.R."/>
            <person name="Russo P.S."/>
        </authorList>
    </citation>
    <scope>FUNCTION</scope>
</reference>
<comment type="function">
    <text evidence="2 4 5 6 10">Aerial growth, conidiation, and dispersal of filamentous fungi in the environment rely upon a capability of their secreting small amphipathic proteins called hydrophobins (HPBs) with low sequence identity. Class I can self-assemble into an outermost layer of rodlet bundles on aerial cell surfaces, conferring cellular hydrophobicity that supports fungal growth, development and dispersal; whereas Class II form highly ordered films at water-air interfaces through intermolecular interactions but contribute nothing to the rodlet structure (Probable). CU is a class II hydrophobin that is implicated in the pathogenicity of this fungus on elm trees (PubMed:10656584, PubMed:25139300, PubMed:9344630). Required for hydrophobicity and adherence of the cells and acts as a parasitic fitness factor by protecting infectious propagules from desiccation (PubMed:9344630). Reduces the interfacial tension of both oil-water and air-water interfaces (PubMed:29413625).</text>
</comment>
<comment type="subunit">
    <text evidence="1">Homotetramer (By similarity). Further self-assembles to form highly ordered films at water-air interfaces through intermolecular interactions (By similarity).</text>
</comment>
<comment type="subcellular location">
    <subcellularLocation>
        <location evidence="1">Secreted</location>
        <location evidence="1">Cell wall</location>
    </subcellularLocation>
    <subcellularLocation>
        <location evidence="1">Secreted</location>
    </subcellularLocation>
</comment>
<comment type="induction">
    <text evidence="3">Expression is higher in mycelial compared to yeast-like stage.</text>
</comment>
<comment type="similarity">
    <text evidence="10">Belongs to the cerato-ulmin hydrophobin family.</text>
</comment>
<proteinExistence type="evidence at protein level"/>